<name>RLMN_BURA4</name>
<organism>
    <name type="scientific">Burkholderia ambifaria (strain MC40-6)</name>
    <dbReference type="NCBI Taxonomy" id="398577"/>
    <lineage>
        <taxon>Bacteria</taxon>
        <taxon>Pseudomonadati</taxon>
        <taxon>Pseudomonadota</taxon>
        <taxon>Betaproteobacteria</taxon>
        <taxon>Burkholderiales</taxon>
        <taxon>Burkholderiaceae</taxon>
        <taxon>Burkholderia</taxon>
        <taxon>Burkholderia cepacia complex</taxon>
    </lineage>
</organism>
<sequence length="379" mass="41351">MTSETSVNLLDFDAEGLVAYCGSLGEKPFRAKQLQRWIHQYNAGDFDGMTDLAKSLREKLKGRASIVMPEIASDHVSADGTRKWLIDVGNGNAVETVFIPEETRGTLCVSSQAGCAVNCRFCSTGKQGFSRNLSTAEIIGQLRMAEFALRASLGRAPGPNGKAERVVTNVVMMGMGEPLLNYNAVVPAMRLMLDDNAYGLSRRRVTLSTSGVVPMMDRLGAELPVALAVSLHAPNDALRDELVPLNKKHPLRELMAACQRYLKVAPRDFITFEYCMLDGVNDTEAHARELLAVTRDVPCKFNLIPFNPFPESGLIRSKPEQIKRFAQVLIDAGVVTTVRKTRGDDIDAACGQLAGAVKDRTRLAERTGAAAKIIEVRAI</sequence>
<feature type="chain" id="PRO_0000350071" description="Dual-specificity RNA methyltransferase RlmN">
    <location>
        <begin position="1"/>
        <end position="379"/>
    </location>
</feature>
<feature type="domain" description="Radical SAM core" evidence="2">
    <location>
        <begin position="101"/>
        <end position="345"/>
    </location>
</feature>
<feature type="active site" description="Proton acceptor" evidence="1">
    <location>
        <position position="95"/>
    </location>
</feature>
<feature type="active site" description="S-methylcysteine intermediate" evidence="1">
    <location>
        <position position="350"/>
    </location>
</feature>
<feature type="binding site" evidence="1">
    <location>
        <position position="115"/>
    </location>
    <ligand>
        <name>[4Fe-4S] cluster</name>
        <dbReference type="ChEBI" id="CHEBI:49883"/>
        <note>4Fe-4S-S-AdoMet</note>
    </ligand>
</feature>
<feature type="binding site" evidence="1">
    <location>
        <position position="119"/>
    </location>
    <ligand>
        <name>[4Fe-4S] cluster</name>
        <dbReference type="ChEBI" id="CHEBI:49883"/>
        <note>4Fe-4S-S-AdoMet</note>
    </ligand>
</feature>
<feature type="binding site" evidence="1">
    <location>
        <position position="122"/>
    </location>
    <ligand>
        <name>[4Fe-4S] cluster</name>
        <dbReference type="ChEBI" id="CHEBI:49883"/>
        <note>4Fe-4S-S-AdoMet</note>
    </ligand>
</feature>
<feature type="binding site" evidence="1">
    <location>
        <begin position="176"/>
        <end position="177"/>
    </location>
    <ligand>
        <name>S-adenosyl-L-methionine</name>
        <dbReference type="ChEBI" id="CHEBI:59789"/>
    </ligand>
</feature>
<feature type="binding site" evidence="1">
    <location>
        <position position="208"/>
    </location>
    <ligand>
        <name>S-adenosyl-L-methionine</name>
        <dbReference type="ChEBI" id="CHEBI:59789"/>
    </ligand>
</feature>
<feature type="binding site" evidence="1">
    <location>
        <begin position="230"/>
        <end position="232"/>
    </location>
    <ligand>
        <name>S-adenosyl-L-methionine</name>
        <dbReference type="ChEBI" id="CHEBI:59789"/>
    </ligand>
</feature>
<feature type="binding site" evidence="1">
    <location>
        <position position="307"/>
    </location>
    <ligand>
        <name>S-adenosyl-L-methionine</name>
        <dbReference type="ChEBI" id="CHEBI:59789"/>
    </ligand>
</feature>
<feature type="disulfide bond" description="(transient)" evidence="1">
    <location>
        <begin position="108"/>
        <end position="350"/>
    </location>
</feature>
<dbReference type="EC" id="2.1.1.192" evidence="1"/>
<dbReference type="EMBL" id="CP001025">
    <property type="protein sequence ID" value="ACB64210.1"/>
    <property type="molecule type" value="Genomic_DNA"/>
</dbReference>
<dbReference type="RefSeq" id="WP_012363996.1">
    <property type="nucleotide sequence ID" value="NC_010551.1"/>
</dbReference>
<dbReference type="SMR" id="B1YR46"/>
<dbReference type="KEGG" id="bac:BamMC406_1725"/>
<dbReference type="HOGENOM" id="CLU_029101_0_0_4"/>
<dbReference type="OrthoDB" id="9793973at2"/>
<dbReference type="Proteomes" id="UP000001680">
    <property type="component" value="Chromosome 1"/>
</dbReference>
<dbReference type="GO" id="GO:0005737">
    <property type="term" value="C:cytoplasm"/>
    <property type="evidence" value="ECO:0007669"/>
    <property type="project" value="UniProtKB-SubCell"/>
</dbReference>
<dbReference type="GO" id="GO:0051539">
    <property type="term" value="F:4 iron, 4 sulfur cluster binding"/>
    <property type="evidence" value="ECO:0007669"/>
    <property type="project" value="UniProtKB-UniRule"/>
</dbReference>
<dbReference type="GO" id="GO:0046872">
    <property type="term" value="F:metal ion binding"/>
    <property type="evidence" value="ECO:0007669"/>
    <property type="project" value="UniProtKB-KW"/>
</dbReference>
<dbReference type="GO" id="GO:0070040">
    <property type="term" value="F:rRNA (adenine(2503)-C2-)-methyltransferase activity"/>
    <property type="evidence" value="ECO:0007669"/>
    <property type="project" value="UniProtKB-UniRule"/>
</dbReference>
<dbReference type="GO" id="GO:0019843">
    <property type="term" value="F:rRNA binding"/>
    <property type="evidence" value="ECO:0007669"/>
    <property type="project" value="UniProtKB-UniRule"/>
</dbReference>
<dbReference type="GO" id="GO:0002935">
    <property type="term" value="F:tRNA (adenine(37)-C2)-methyltransferase activity"/>
    <property type="evidence" value="ECO:0007669"/>
    <property type="project" value="UniProtKB-UniRule"/>
</dbReference>
<dbReference type="GO" id="GO:0000049">
    <property type="term" value="F:tRNA binding"/>
    <property type="evidence" value="ECO:0007669"/>
    <property type="project" value="UniProtKB-UniRule"/>
</dbReference>
<dbReference type="GO" id="GO:0070475">
    <property type="term" value="P:rRNA base methylation"/>
    <property type="evidence" value="ECO:0007669"/>
    <property type="project" value="UniProtKB-UniRule"/>
</dbReference>
<dbReference type="GO" id="GO:0030488">
    <property type="term" value="P:tRNA methylation"/>
    <property type="evidence" value="ECO:0007669"/>
    <property type="project" value="UniProtKB-UniRule"/>
</dbReference>
<dbReference type="CDD" id="cd01335">
    <property type="entry name" value="Radical_SAM"/>
    <property type="match status" value="1"/>
</dbReference>
<dbReference type="FunFam" id="1.10.150.530:FF:000003">
    <property type="entry name" value="Dual-specificity RNA methyltransferase RlmN"/>
    <property type="match status" value="1"/>
</dbReference>
<dbReference type="FunFam" id="3.20.20.70:FF:000008">
    <property type="entry name" value="Dual-specificity RNA methyltransferase RlmN"/>
    <property type="match status" value="1"/>
</dbReference>
<dbReference type="Gene3D" id="1.10.150.530">
    <property type="match status" value="1"/>
</dbReference>
<dbReference type="Gene3D" id="3.20.20.70">
    <property type="entry name" value="Aldolase class I"/>
    <property type="match status" value="1"/>
</dbReference>
<dbReference type="HAMAP" id="MF_01849">
    <property type="entry name" value="RNA_methyltr_RlmN"/>
    <property type="match status" value="1"/>
</dbReference>
<dbReference type="InterPro" id="IPR013785">
    <property type="entry name" value="Aldolase_TIM"/>
</dbReference>
<dbReference type="InterPro" id="IPR040072">
    <property type="entry name" value="Methyltransferase_A"/>
</dbReference>
<dbReference type="InterPro" id="IPR048641">
    <property type="entry name" value="RlmN_N"/>
</dbReference>
<dbReference type="InterPro" id="IPR027492">
    <property type="entry name" value="RNA_MTrfase_RlmN"/>
</dbReference>
<dbReference type="InterPro" id="IPR004383">
    <property type="entry name" value="rRNA_lsu_MTrfase_RlmN/Cfr"/>
</dbReference>
<dbReference type="InterPro" id="IPR007197">
    <property type="entry name" value="rSAM"/>
</dbReference>
<dbReference type="NCBIfam" id="TIGR00048">
    <property type="entry name" value="rRNA_mod_RlmN"/>
    <property type="match status" value="1"/>
</dbReference>
<dbReference type="PANTHER" id="PTHR30544">
    <property type="entry name" value="23S RRNA METHYLTRANSFERASE"/>
    <property type="match status" value="1"/>
</dbReference>
<dbReference type="PANTHER" id="PTHR30544:SF5">
    <property type="entry name" value="RADICAL SAM CORE DOMAIN-CONTAINING PROTEIN"/>
    <property type="match status" value="1"/>
</dbReference>
<dbReference type="Pfam" id="PF04055">
    <property type="entry name" value="Radical_SAM"/>
    <property type="match status" value="1"/>
</dbReference>
<dbReference type="Pfam" id="PF21016">
    <property type="entry name" value="RlmN_N"/>
    <property type="match status" value="1"/>
</dbReference>
<dbReference type="PIRSF" id="PIRSF006004">
    <property type="entry name" value="CHP00048"/>
    <property type="match status" value="1"/>
</dbReference>
<dbReference type="SFLD" id="SFLDF00275">
    <property type="entry name" value="adenosine_C2_methyltransferase"/>
    <property type="match status" value="1"/>
</dbReference>
<dbReference type="SFLD" id="SFLDS00029">
    <property type="entry name" value="Radical_SAM"/>
    <property type="match status" value="1"/>
</dbReference>
<dbReference type="SUPFAM" id="SSF102114">
    <property type="entry name" value="Radical SAM enzymes"/>
    <property type="match status" value="1"/>
</dbReference>
<dbReference type="PROSITE" id="PS51918">
    <property type="entry name" value="RADICAL_SAM"/>
    <property type="match status" value="1"/>
</dbReference>
<keyword id="KW-0004">4Fe-4S</keyword>
<keyword id="KW-0963">Cytoplasm</keyword>
<keyword id="KW-1015">Disulfide bond</keyword>
<keyword id="KW-0408">Iron</keyword>
<keyword id="KW-0411">Iron-sulfur</keyword>
<keyword id="KW-0479">Metal-binding</keyword>
<keyword id="KW-0489">Methyltransferase</keyword>
<keyword id="KW-0698">rRNA processing</keyword>
<keyword id="KW-0949">S-adenosyl-L-methionine</keyword>
<keyword id="KW-0808">Transferase</keyword>
<keyword id="KW-0819">tRNA processing</keyword>
<evidence type="ECO:0000255" key="1">
    <source>
        <dbReference type="HAMAP-Rule" id="MF_01849"/>
    </source>
</evidence>
<evidence type="ECO:0000255" key="2">
    <source>
        <dbReference type="PROSITE-ProRule" id="PRU01266"/>
    </source>
</evidence>
<protein>
    <recommendedName>
        <fullName evidence="1">Dual-specificity RNA methyltransferase RlmN</fullName>
        <ecNumber evidence="1">2.1.1.192</ecNumber>
    </recommendedName>
    <alternativeName>
        <fullName evidence="1">23S rRNA (adenine(2503)-C(2))-methyltransferase</fullName>
    </alternativeName>
    <alternativeName>
        <fullName evidence="1">23S rRNA m2A2503 methyltransferase</fullName>
    </alternativeName>
    <alternativeName>
        <fullName evidence="1">Ribosomal RNA large subunit methyltransferase N</fullName>
    </alternativeName>
    <alternativeName>
        <fullName evidence="1">tRNA (adenine(37)-C(2))-methyltransferase</fullName>
    </alternativeName>
    <alternativeName>
        <fullName evidence="1">tRNA m2A37 methyltransferase</fullName>
    </alternativeName>
</protein>
<proteinExistence type="inferred from homology"/>
<accession>B1YR46</accession>
<reference key="1">
    <citation type="submission" date="2008-04" db="EMBL/GenBank/DDBJ databases">
        <title>Complete sequence of chromosome 1 of Burkholderia ambifaria MC40-6.</title>
        <authorList>
            <person name="Copeland A."/>
            <person name="Lucas S."/>
            <person name="Lapidus A."/>
            <person name="Glavina del Rio T."/>
            <person name="Dalin E."/>
            <person name="Tice H."/>
            <person name="Pitluck S."/>
            <person name="Chain P."/>
            <person name="Malfatti S."/>
            <person name="Shin M."/>
            <person name="Vergez L."/>
            <person name="Lang D."/>
            <person name="Schmutz J."/>
            <person name="Larimer F."/>
            <person name="Land M."/>
            <person name="Hauser L."/>
            <person name="Kyrpides N."/>
            <person name="Lykidis A."/>
            <person name="Ramette A."/>
            <person name="Konstantinidis K."/>
            <person name="Tiedje J."/>
            <person name="Richardson P."/>
        </authorList>
    </citation>
    <scope>NUCLEOTIDE SEQUENCE [LARGE SCALE GENOMIC DNA]</scope>
    <source>
        <strain>MC40-6</strain>
    </source>
</reference>
<comment type="function">
    <text evidence="1">Specifically methylates position 2 of adenine 2503 in 23S rRNA and position 2 of adenine 37 in tRNAs. m2A2503 modification seems to play a crucial role in the proofreading step occurring at the peptidyl transferase center and thus would serve to optimize ribosomal fidelity.</text>
</comment>
<comment type="catalytic activity">
    <reaction evidence="1">
        <text>adenosine(2503) in 23S rRNA + 2 reduced [2Fe-2S]-[ferredoxin] + 2 S-adenosyl-L-methionine = 2-methyladenosine(2503) in 23S rRNA + 5'-deoxyadenosine + L-methionine + 2 oxidized [2Fe-2S]-[ferredoxin] + S-adenosyl-L-homocysteine</text>
        <dbReference type="Rhea" id="RHEA:42916"/>
        <dbReference type="Rhea" id="RHEA-COMP:10000"/>
        <dbReference type="Rhea" id="RHEA-COMP:10001"/>
        <dbReference type="Rhea" id="RHEA-COMP:10152"/>
        <dbReference type="Rhea" id="RHEA-COMP:10282"/>
        <dbReference type="ChEBI" id="CHEBI:17319"/>
        <dbReference type="ChEBI" id="CHEBI:33737"/>
        <dbReference type="ChEBI" id="CHEBI:33738"/>
        <dbReference type="ChEBI" id="CHEBI:57844"/>
        <dbReference type="ChEBI" id="CHEBI:57856"/>
        <dbReference type="ChEBI" id="CHEBI:59789"/>
        <dbReference type="ChEBI" id="CHEBI:74411"/>
        <dbReference type="ChEBI" id="CHEBI:74497"/>
        <dbReference type="EC" id="2.1.1.192"/>
    </reaction>
</comment>
<comment type="catalytic activity">
    <reaction evidence="1">
        <text>adenosine(37) in tRNA + 2 reduced [2Fe-2S]-[ferredoxin] + 2 S-adenosyl-L-methionine = 2-methyladenosine(37) in tRNA + 5'-deoxyadenosine + L-methionine + 2 oxidized [2Fe-2S]-[ferredoxin] + S-adenosyl-L-homocysteine</text>
        <dbReference type="Rhea" id="RHEA:43332"/>
        <dbReference type="Rhea" id="RHEA-COMP:10000"/>
        <dbReference type="Rhea" id="RHEA-COMP:10001"/>
        <dbReference type="Rhea" id="RHEA-COMP:10162"/>
        <dbReference type="Rhea" id="RHEA-COMP:10485"/>
        <dbReference type="ChEBI" id="CHEBI:17319"/>
        <dbReference type="ChEBI" id="CHEBI:33737"/>
        <dbReference type="ChEBI" id="CHEBI:33738"/>
        <dbReference type="ChEBI" id="CHEBI:57844"/>
        <dbReference type="ChEBI" id="CHEBI:57856"/>
        <dbReference type="ChEBI" id="CHEBI:59789"/>
        <dbReference type="ChEBI" id="CHEBI:74411"/>
        <dbReference type="ChEBI" id="CHEBI:74497"/>
        <dbReference type="EC" id="2.1.1.192"/>
    </reaction>
</comment>
<comment type="cofactor">
    <cofactor evidence="1">
        <name>[4Fe-4S] cluster</name>
        <dbReference type="ChEBI" id="CHEBI:49883"/>
    </cofactor>
    <text evidence="1">Binds 1 [4Fe-4S] cluster. The cluster is coordinated with 3 cysteines and an exchangeable S-adenosyl-L-methionine.</text>
</comment>
<comment type="subcellular location">
    <subcellularLocation>
        <location evidence="1">Cytoplasm</location>
    </subcellularLocation>
</comment>
<comment type="miscellaneous">
    <text evidence="1">Reaction proceeds by a ping-pong mechanism involving intermediate methylation of a conserved cysteine residue.</text>
</comment>
<comment type="similarity">
    <text evidence="1">Belongs to the radical SAM superfamily. RlmN family.</text>
</comment>
<gene>
    <name evidence="1" type="primary">rlmN</name>
    <name type="ordered locus">BamMC406_1725</name>
</gene>